<protein>
    <recommendedName>
        <fullName evidence="1">Nucleotide-binding protein BAV0791</fullName>
    </recommendedName>
</protein>
<keyword id="KW-0547">Nucleotide-binding</keyword>
<keyword id="KW-1185">Reference proteome</keyword>
<name>Y791_BORA1</name>
<proteinExistence type="inferred from homology"/>
<evidence type="ECO:0000255" key="1">
    <source>
        <dbReference type="HAMAP-Rule" id="MF_00632"/>
    </source>
</evidence>
<reference key="1">
    <citation type="journal article" date="2006" name="J. Bacteriol.">
        <title>Comparison of the genome sequence of the poultry pathogen Bordetella avium with those of B. bronchiseptica, B. pertussis, and B. parapertussis reveals extensive diversity in surface structures associated with host interaction.</title>
        <authorList>
            <person name="Sebaihia M."/>
            <person name="Preston A."/>
            <person name="Maskell D.J."/>
            <person name="Kuzmiak H."/>
            <person name="Connell T.D."/>
            <person name="King N.D."/>
            <person name="Orndorff P.E."/>
            <person name="Miyamoto D.M."/>
            <person name="Thomson N.R."/>
            <person name="Harris D."/>
            <person name="Goble A."/>
            <person name="Lord A."/>
            <person name="Murphy L."/>
            <person name="Quail M.A."/>
            <person name="Rutter S."/>
            <person name="Squares R."/>
            <person name="Squares S."/>
            <person name="Woodward J."/>
            <person name="Parkhill J."/>
            <person name="Temple L.M."/>
        </authorList>
    </citation>
    <scope>NUCLEOTIDE SEQUENCE [LARGE SCALE GENOMIC DNA]</scope>
    <source>
        <strain>197N</strain>
    </source>
</reference>
<comment type="function">
    <text evidence="1">Nucleotide-binding protein.</text>
</comment>
<comment type="similarity">
    <text evidence="1">Belongs to the YajQ family.</text>
</comment>
<feature type="chain" id="PRO_0000261920" description="Nucleotide-binding protein BAV0791">
    <location>
        <begin position="1"/>
        <end position="160"/>
    </location>
</feature>
<accession>Q2KWN1</accession>
<dbReference type="EMBL" id="AM167904">
    <property type="protein sequence ID" value="CAJ48403.1"/>
    <property type="molecule type" value="Genomic_DNA"/>
</dbReference>
<dbReference type="RefSeq" id="WP_012416485.1">
    <property type="nucleotide sequence ID" value="NC_010645.1"/>
</dbReference>
<dbReference type="SMR" id="Q2KWN1"/>
<dbReference type="STRING" id="360910.BAV0791"/>
<dbReference type="GeneID" id="92936026"/>
<dbReference type="KEGG" id="bav:BAV0791"/>
<dbReference type="eggNOG" id="COG1666">
    <property type="taxonomic scope" value="Bacteria"/>
</dbReference>
<dbReference type="HOGENOM" id="CLU_099839_1_0_4"/>
<dbReference type="OrthoDB" id="9801447at2"/>
<dbReference type="Proteomes" id="UP000001977">
    <property type="component" value="Chromosome"/>
</dbReference>
<dbReference type="GO" id="GO:0005829">
    <property type="term" value="C:cytosol"/>
    <property type="evidence" value="ECO:0007669"/>
    <property type="project" value="TreeGrafter"/>
</dbReference>
<dbReference type="GO" id="GO:0000166">
    <property type="term" value="F:nucleotide binding"/>
    <property type="evidence" value="ECO:0007669"/>
    <property type="project" value="TreeGrafter"/>
</dbReference>
<dbReference type="CDD" id="cd11740">
    <property type="entry name" value="YajQ_like"/>
    <property type="match status" value="1"/>
</dbReference>
<dbReference type="Gene3D" id="3.30.70.860">
    <property type="match status" value="1"/>
</dbReference>
<dbReference type="Gene3D" id="3.30.70.990">
    <property type="entry name" value="YajQ-like, domain 2"/>
    <property type="match status" value="1"/>
</dbReference>
<dbReference type="HAMAP" id="MF_00632">
    <property type="entry name" value="YajQ"/>
    <property type="match status" value="1"/>
</dbReference>
<dbReference type="InterPro" id="IPR007551">
    <property type="entry name" value="DUF520"/>
</dbReference>
<dbReference type="InterPro" id="IPR035571">
    <property type="entry name" value="UPF0234-like_C"/>
</dbReference>
<dbReference type="InterPro" id="IPR035570">
    <property type="entry name" value="UPF0234_N"/>
</dbReference>
<dbReference type="InterPro" id="IPR036183">
    <property type="entry name" value="YajQ-like_sf"/>
</dbReference>
<dbReference type="NCBIfam" id="NF003819">
    <property type="entry name" value="PRK05412.1"/>
    <property type="match status" value="1"/>
</dbReference>
<dbReference type="PANTHER" id="PTHR30476">
    <property type="entry name" value="UPF0234 PROTEIN YAJQ"/>
    <property type="match status" value="1"/>
</dbReference>
<dbReference type="PANTHER" id="PTHR30476:SF0">
    <property type="entry name" value="UPF0234 PROTEIN YAJQ"/>
    <property type="match status" value="1"/>
</dbReference>
<dbReference type="Pfam" id="PF04461">
    <property type="entry name" value="DUF520"/>
    <property type="match status" value="1"/>
</dbReference>
<dbReference type="SUPFAM" id="SSF89963">
    <property type="entry name" value="YajQ-like"/>
    <property type="match status" value="2"/>
</dbReference>
<gene>
    <name type="ordered locus">BAV0791</name>
</gene>
<organism>
    <name type="scientific">Bordetella avium (strain 197N)</name>
    <dbReference type="NCBI Taxonomy" id="360910"/>
    <lineage>
        <taxon>Bacteria</taxon>
        <taxon>Pseudomonadati</taxon>
        <taxon>Pseudomonadota</taxon>
        <taxon>Betaproteobacteria</taxon>
        <taxon>Burkholderiales</taxon>
        <taxon>Alcaligenaceae</taxon>
        <taxon>Bordetella</taxon>
    </lineage>
</organism>
<sequence length="160" mass="17949">MPSFDVVSEVDKHELTNAVDQANRELSTRFDFKGSDAKFELEGYVVTQVASSAFQLKQMLDILRGRLGARGIDVRCLDEESPLENLGGARQKITIKQGIEQAVSKKLIAAIKASKLKVESQINGEKLRITGKKRDDLQAVMQLLRKTEVDLPLQFDNFRD</sequence>